<gene>
    <name type="primary">pglB</name>
    <name type="ordered locus">Cj1126c</name>
</gene>
<protein>
    <recommendedName>
        <fullName>Undecaprenyl-diphosphooligosaccharide--protein glycotransferase</fullName>
        <ecNumber>2.4.99.19</ecNumber>
    </recommendedName>
    <alternativeName>
        <fullName>Protein glycosylation B</fullName>
    </alternativeName>
</protein>
<accession>Q0P9C8</accession>
<name>PGLB_CAMJE</name>
<sequence length="713" mass="82201">MLKKEYLKNPYLVLFAMIVLAYVFSVFCRFYWVWWASEFNEYFFNNQLMIISNDGYAFAEGARDMIAGFHQPNDLSYYGSSLSTLTYWLYKITPFSFESIILYMSTFLSSLVVIPIILLANEYKRPLMGFVAALLASVANSYYNRTMSGYYDTDMLVIVLPMFILFFMVRMILKKDFFSLIALPLFIGIYLWWYPSSYTLNVALIGLFLIYTLIFHRKEKIFYIAVILSSLTLSNIAWFYQSAIIVILFALFALEQKRLNFMIIGILGSATLIFLILSGGVDPILYQLKFYIFRSDESANLTQGFMYFNVNQTIQEVENVDFSEFMRRISGSEIVFLFSLFGFVWLLRKHKSMIMALPILVLGFLALKGGLRFTIYSVPVMALGFGFLLSEFKAILVKKYSQLTSNVCIVFATILTLAPVFIHIYNYKAPTVFSQNEASLLNQLKNIANREDYVVTWWDYGYPVRYYSDVKTLVDGGKHLGKDNFFPSFSLSKDEQAAANMARLSVEYTEKSFYAPQNDILKSDILQAMMKDYNQSNVDLFLASLSKPDFKIDTPKTRDIYLYMPARMSLIFSTVASFSFINLDTGVLDKPFTFSTAYPLDVKNGEIYLSNGVVLSDDFRSFKIGDNVVSVNSIVEINSIKQGEYKITPIDDKAQFYIFYLKDSAIPYAQFILMDKTMFNSAYVQMFFLGNYDKNLFDLVINSRDAKVFKLKI</sequence>
<proteinExistence type="evidence at protein level"/>
<dbReference type="EC" id="2.4.99.19"/>
<dbReference type="EMBL" id="AL111168">
    <property type="protein sequence ID" value="CAL35243.1"/>
    <property type="molecule type" value="Genomic_DNA"/>
</dbReference>
<dbReference type="PIR" id="A81317">
    <property type="entry name" value="A81317"/>
</dbReference>
<dbReference type="RefSeq" id="WP_002852780.1">
    <property type="nucleotide sequence ID" value="NZ_SZUC01000001.1"/>
</dbReference>
<dbReference type="RefSeq" id="YP_002344519.1">
    <property type="nucleotide sequence ID" value="NC_002163.1"/>
</dbReference>
<dbReference type="SMR" id="Q0P9C8"/>
<dbReference type="IntAct" id="Q0P9C8">
    <property type="interactions" value="1"/>
</dbReference>
<dbReference type="STRING" id="192222.Cj1126c"/>
<dbReference type="CAZy" id="GT66">
    <property type="family name" value="Glycosyltransferase Family 66"/>
</dbReference>
<dbReference type="GlyCosmos" id="Q0P9C8">
    <property type="glycosylation" value="1 site, No reported glycans"/>
</dbReference>
<dbReference type="PaxDb" id="192222-Cj1126c"/>
<dbReference type="EnsemblBacteria" id="CAL35243">
    <property type="protein sequence ID" value="CAL35243"/>
    <property type="gene ID" value="Cj1126c"/>
</dbReference>
<dbReference type="GeneID" id="905417"/>
<dbReference type="KEGG" id="cje:Cj1126c"/>
<dbReference type="PATRIC" id="fig|192222.6.peg.1108"/>
<dbReference type="eggNOG" id="COG1287">
    <property type="taxonomic scope" value="Bacteria"/>
</dbReference>
<dbReference type="HOGENOM" id="CLU_024679_0_0_7"/>
<dbReference type="OrthoDB" id="9796223at2"/>
<dbReference type="BioCyc" id="MetaCyc:MONOMER-17335"/>
<dbReference type="UniPathway" id="UPA00378"/>
<dbReference type="PHI-base" id="PHI:8747"/>
<dbReference type="Proteomes" id="UP000000799">
    <property type="component" value="Chromosome"/>
</dbReference>
<dbReference type="GO" id="GO:0005886">
    <property type="term" value="C:plasma membrane"/>
    <property type="evidence" value="ECO:0007669"/>
    <property type="project" value="UniProtKB-SubCell"/>
</dbReference>
<dbReference type="GO" id="GO:0016757">
    <property type="term" value="F:glycosyltransferase activity"/>
    <property type="evidence" value="ECO:0000314"/>
    <property type="project" value="UniProtKB"/>
</dbReference>
<dbReference type="GO" id="GO:0046872">
    <property type="term" value="F:metal ion binding"/>
    <property type="evidence" value="ECO:0007669"/>
    <property type="project" value="UniProtKB-KW"/>
</dbReference>
<dbReference type="GO" id="GO:0004576">
    <property type="term" value="F:oligosaccharyl transferase activity"/>
    <property type="evidence" value="ECO:0007669"/>
    <property type="project" value="InterPro"/>
</dbReference>
<dbReference type="GO" id="GO:0018279">
    <property type="term" value="P:protein N-linked glycosylation via asparagine"/>
    <property type="evidence" value="ECO:0000314"/>
    <property type="project" value="UniProtKB"/>
</dbReference>
<dbReference type="FunFam" id="3.40.1380.40:FF:000001">
    <property type="entry name" value="Undecaprenyl-diphosphooligosaccharide--protein glycotransferase"/>
    <property type="match status" value="1"/>
</dbReference>
<dbReference type="Gene3D" id="3.40.1380.40">
    <property type="match status" value="1"/>
</dbReference>
<dbReference type="InterPro" id="IPR003674">
    <property type="entry name" value="Oligo_trans_STT3"/>
</dbReference>
<dbReference type="InterPro" id="IPR048999">
    <property type="entry name" value="STT3-PglB_core"/>
</dbReference>
<dbReference type="InterPro" id="IPR048307">
    <property type="entry name" value="STT3_N"/>
</dbReference>
<dbReference type="InterPro" id="IPR041563">
    <property type="entry name" value="STT3_PglB_C"/>
</dbReference>
<dbReference type="PANTHER" id="PTHR13872">
    <property type="entry name" value="DOLICHYL-DIPHOSPHOOLIGOSACCHARIDE--PROTEIN GLYCOSYLTRANSFERASE SUBUNIT"/>
    <property type="match status" value="1"/>
</dbReference>
<dbReference type="PANTHER" id="PTHR13872:SF1">
    <property type="entry name" value="DOLICHYL-DIPHOSPHOOLIGOSACCHARIDE--PROTEIN GLYCOSYLTRANSFERASE SUBUNIT STT3B"/>
    <property type="match status" value="1"/>
</dbReference>
<dbReference type="Pfam" id="PF02516">
    <property type="entry name" value="STT3"/>
    <property type="match status" value="1"/>
</dbReference>
<dbReference type="Pfam" id="PF21436">
    <property type="entry name" value="STT3-PglB_core"/>
    <property type="match status" value="1"/>
</dbReference>
<dbReference type="Pfam" id="PF18527">
    <property type="entry name" value="STT3_PglB_C"/>
    <property type="match status" value="1"/>
</dbReference>
<keyword id="KW-0997">Cell inner membrane</keyword>
<keyword id="KW-1003">Cell membrane</keyword>
<keyword id="KW-0325">Glycoprotein</keyword>
<keyword id="KW-0328">Glycosyltransferase</keyword>
<keyword id="KW-0460">Magnesium</keyword>
<keyword id="KW-0464">Manganese</keyword>
<keyword id="KW-0472">Membrane</keyword>
<keyword id="KW-0479">Metal-binding</keyword>
<keyword id="KW-1185">Reference proteome</keyword>
<keyword id="KW-0808">Transferase</keyword>
<keyword id="KW-0812">Transmembrane</keyword>
<keyword id="KW-1133">Transmembrane helix</keyword>
<comment type="function">
    <text evidence="5">Oligosaccharyl transferase (OST) that catalyzes the initial transfer of a defined glycan (GalNAc(2)GlcGalNAc(3)Bac(NAc)(2) in eubacteria, where Bac(NAc)(2) is di-N-acetyl bacillosamine) from the lipid carrier undecaprenol-pyrophosphate to an asparagine residue within an Asp/Glu-Asn-X-Ser/Thr consensus motif in nascent polypeptide chains, the first step in protein N-glycosylation.</text>
</comment>
<comment type="catalytic activity">
    <reaction evidence="5">
        <text>tritrans,heptacis-undecaprenyl diphosphooligosaccharide + [protein]-L-asparagine = tritrans,heptacis-undecaprenyl diphosphate + a glycoprotein with the oligosaccharide chain attached by N-beta-D-glycosyl linkage to protein L-asparagine.</text>
        <dbReference type="EC" id="2.4.99.19"/>
    </reaction>
</comment>
<comment type="cofactor">
    <cofactor evidence="1">
        <name>Mg(2+)</name>
        <dbReference type="ChEBI" id="CHEBI:18420"/>
    </cofactor>
    <cofactor evidence="1">
        <name>Mn(2+)</name>
        <dbReference type="ChEBI" id="CHEBI:29035"/>
    </cofactor>
</comment>
<comment type="pathway">
    <text evidence="5">Protein modification; protein glycosylation.</text>
</comment>
<comment type="subcellular location">
    <subcellularLocation>
        <location evidence="7">Cell inner membrane</location>
        <topology evidence="7">Multi-pass membrane protein</topology>
    </subcellularLocation>
</comment>
<comment type="domain">
    <text evidence="1">Despite low primary sequence conservation between eukaryotic catalytic subunits and bacterial and archaeal single subunit OSTs (ssOST), structural comparison revealed several common motifs at spatially equivalent positions, like the DXD motif 1 on the external loop 1 and the DXD motif 2 on the external loop 2 involved in binding of the metal ion cofactor and the carboxamide group of the acceptor asparagine, the conserved Glu residue of the TIXE/SVSE motif on the external loop 5 involved in catalysis, as well as the WWDYG and the DK/MI motifs in the globular domain that define the binding pocket for the +2 Ser/Thr of the acceptor sequon. In bacterial ssOSTs, an Arg residue was found to interact with a negatively charged side chain at the -2 position of the sequon. This Arg is conserved in bacterial enzymes and correlates with an extended sequon requirement (Asp-X-Asn-X-Ser/Thr) for bacterial N-glycosylation.</text>
</comment>
<comment type="similarity">
    <text evidence="6">Belongs to the STT3 family.</text>
</comment>
<reference key="1">
    <citation type="journal article" date="2000" name="Nature">
        <title>The genome sequence of the food-borne pathogen Campylobacter jejuni reveals hypervariable sequences.</title>
        <authorList>
            <person name="Parkhill J."/>
            <person name="Wren B.W."/>
            <person name="Mungall K.L."/>
            <person name="Ketley J.M."/>
            <person name="Churcher C.M."/>
            <person name="Basham D."/>
            <person name="Chillingworth T."/>
            <person name="Davies R.M."/>
            <person name="Feltwell T."/>
            <person name="Holroyd S."/>
            <person name="Jagels K."/>
            <person name="Karlyshev A.V."/>
            <person name="Moule S."/>
            <person name="Pallen M.J."/>
            <person name="Penn C.W."/>
            <person name="Quail M.A."/>
            <person name="Rajandream M.A."/>
            <person name="Rutherford K.M."/>
            <person name="van Vliet A.H.M."/>
            <person name="Whitehead S."/>
            <person name="Barrell B.G."/>
        </authorList>
    </citation>
    <scope>NUCLEOTIDE SEQUENCE [LARGE SCALE GENOMIC DNA]</scope>
    <source>
        <strain>ATCC 700819 / NCTC 11168</strain>
    </source>
</reference>
<reference key="2">
    <citation type="journal article" date="2005" name="Chem. Biol.">
        <title>Chemoenzymatic synthesis of glycopeptides with PglB, a bacterial oligosaccharyl transferase from Campylobacter jejuni.</title>
        <authorList>
            <person name="Glover K.J."/>
            <person name="Weerapana E."/>
            <person name="Numao S."/>
            <person name="Imperiali B."/>
        </authorList>
    </citation>
    <scope>FUNCTION</scope>
    <scope>CATALYTIC ACTIVITY</scope>
    <scope>PATHWAY</scope>
    <source>
        <strain>ATCC 700819 / NCTC 11168</strain>
    </source>
</reference>
<reference key="3">
    <citation type="journal article" date="2010" name="Biochem. Biophys. Res. Commun.">
        <title>Overexpression and topology of bacterial oligosaccharyltransferase PglB.</title>
        <authorList>
            <person name="Li L."/>
            <person name="Woodward R."/>
            <person name="Ding Y."/>
            <person name="Liu X.W."/>
            <person name="Yi W."/>
            <person name="Bhatt V.S."/>
            <person name="Chen M."/>
            <person name="Zhang L.W."/>
            <person name="Wang P.G."/>
        </authorList>
    </citation>
    <scope>SUBCELLULAR LOCATION</scope>
    <scope>TOPOLOGY</scope>
</reference>
<organism>
    <name type="scientific">Campylobacter jejuni subsp. jejuni serotype O:2 (strain ATCC 700819 / NCTC 11168)</name>
    <dbReference type="NCBI Taxonomy" id="192222"/>
    <lineage>
        <taxon>Bacteria</taxon>
        <taxon>Pseudomonadati</taxon>
        <taxon>Campylobacterota</taxon>
        <taxon>Epsilonproteobacteria</taxon>
        <taxon>Campylobacterales</taxon>
        <taxon>Campylobacteraceae</taxon>
        <taxon>Campylobacter</taxon>
    </lineage>
</organism>
<feature type="chain" id="PRO_0000422587" description="Undecaprenyl-diphosphooligosaccharide--protein glycotransferase">
    <location>
        <begin position="1"/>
        <end position="713"/>
    </location>
</feature>
<feature type="topological domain" description="Cytoplasmic" evidence="6">
    <location>
        <begin position="1"/>
        <end position="11"/>
    </location>
</feature>
<feature type="transmembrane region" description="Helical" evidence="1">
    <location>
        <begin position="12"/>
        <end position="35"/>
    </location>
</feature>
<feature type="topological domain" description="Periplasmic" evidence="6">
    <location>
        <begin position="36"/>
        <end position="96"/>
    </location>
</feature>
<feature type="transmembrane region" description="Helical" evidence="1">
    <location>
        <begin position="97"/>
        <end position="122"/>
    </location>
</feature>
<feature type="topological domain" description="Cytoplasmic" evidence="6">
    <location>
        <begin position="123"/>
        <end position="125"/>
    </location>
</feature>
<feature type="transmembrane region" description="Helical" evidence="1">
    <location>
        <begin position="126"/>
        <end position="144"/>
    </location>
</feature>
<feature type="topological domain" description="Periplasmic" evidence="6">
    <location>
        <begin position="145"/>
        <end position="152"/>
    </location>
</feature>
<feature type="transmembrane region" description="Helical" evidence="1">
    <location>
        <begin position="153"/>
        <end position="174"/>
    </location>
</feature>
<feature type="topological domain" description="Cytoplasmic" evidence="6">
    <location>
        <begin position="175"/>
        <end position="176"/>
    </location>
</feature>
<feature type="transmembrane region" description="Helical" evidence="1">
    <location>
        <begin position="177"/>
        <end position="192"/>
    </location>
</feature>
<feature type="topological domain" description="Periplasmic" evidence="6">
    <location>
        <begin position="193"/>
        <end position="197"/>
    </location>
</feature>
<feature type="transmembrane region" description="Helical" evidence="1">
    <location>
        <begin position="198"/>
        <end position="215"/>
    </location>
</feature>
<feature type="topological domain" description="Cytoplasmic" evidence="6">
    <location>
        <begin position="216"/>
        <end position="220"/>
    </location>
</feature>
<feature type="transmembrane region" description="Helical" evidence="1">
    <location>
        <begin position="221"/>
        <end position="233"/>
    </location>
</feature>
<feature type="topological domain" description="Periplasmic" evidence="6">
    <location>
        <begin position="234"/>
        <end position="237"/>
    </location>
</feature>
<feature type="transmembrane region" description="Helical" evidence="1">
    <location>
        <begin position="238"/>
        <end position="254"/>
    </location>
</feature>
<feature type="topological domain" description="Cytoplasmic" evidence="6">
    <location>
        <begin position="255"/>
        <end position="260"/>
    </location>
</feature>
<feature type="transmembrane region" description="Helical" evidence="1">
    <location>
        <begin position="261"/>
        <end position="278"/>
    </location>
</feature>
<feature type="topological domain" description="Periplasmic" evidence="6">
    <location>
        <begin position="279"/>
        <end position="324"/>
    </location>
</feature>
<feature type="transmembrane region" description="Helical" evidence="1">
    <location>
        <begin position="325"/>
        <end position="347"/>
    </location>
</feature>
<feature type="topological domain" description="Cytoplasmic" evidence="6">
    <location>
        <begin position="348"/>
        <end position="352"/>
    </location>
</feature>
<feature type="transmembrane region" description="Helical" evidence="1">
    <location>
        <begin position="353"/>
        <end position="369"/>
    </location>
</feature>
<feature type="topological domain" description="Periplasmic" evidence="6">
    <location>
        <begin position="370"/>
        <end position="373"/>
    </location>
</feature>
<feature type="transmembrane region" description="Helical" evidence="1">
    <location>
        <begin position="374"/>
        <end position="396"/>
    </location>
</feature>
<feature type="topological domain" description="Cytoplasmic" evidence="6">
    <location>
        <begin position="397"/>
        <end position="406"/>
    </location>
</feature>
<feature type="transmembrane region" description="Helical" evidence="1">
    <location>
        <begin position="407"/>
        <end position="427"/>
    </location>
</feature>
<feature type="topological domain" description="Periplasmic" evidence="6">
    <location>
        <begin position="428"/>
        <end position="713"/>
    </location>
</feature>
<feature type="region of interest" description="Interacts with target acceptor peptide in protein substrate" evidence="1">
    <location>
        <begin position="457"/>
        <end position="459"/>
    </location>
</feature>
<feature type="short sequence motif" description="DXD motif 1" evidence="4">
    <location>
        <begin position="52"/>
        <end position="54"/>
    </location>
</feature>
<feature type="short sequence motif" description="DXD motif 2" evidence="1">
    <location>
        <begin position="152"/>
        <end position="154"/>
    </location>
</feature>
<feature type="short sequence motif" description="TIXE motif" evidence="2">
    <location>
        <begin position="313"/>
        <end position="316"/>
    </location>
</feature>
<feature type="short sequence motif" description="WWDYG motif" evidence="3">
    <location>
        <begin position="457"/>
        <end position="461"/>
    </location>
</feature>
<feature type="short sequence motif" description="MI motif" evidence="3">
    <location>
        <begin position="568"/>
        <end position="575"/>
    </location>
</feature>
<feature type="binding site" evidence="1">
    <location>
        <position position="54"/>
    </location>
    <ligand>
        <name>Mn(2+)</name>
        <dbReference type="ChEBI" id="CHEBI:29035"/>
    </ligand>
</feature>
<feature type="binding site" evidence="1">
    <location>
        <position position="152"/>
    </location>
    <ligand>
        <name>Mn(2+)</name>
        <dbReference type="ChEBI" id="CHEBI:29035"/>
    </ligand>
</feature>
<feature type="binding site" evidence="1">
    <location>
        <begin position="194"/>
        <end position="196"/>
    </location>
    <ligand>
        <name>[alpha-D-GalNAc-(1-&gt;4)]2-[beta-D-Glc-(1-&gt;3)]-[alpha-D-GalNAc-(1-&gt;4)]2-alpha-D-GalNAc-(1-&gt;3)-alpha-D-diNAcBac-tri-trans,hepta-cis-undecaprenyl diphosphate</name>
        <dbReference type="ChEBI" id="CHEBI:68654"/>
    </ligand>
</feature>
<feature type="binding site" evidence="1">
    <location>
        <position position="291"/>
    </location>
    <ligand>
        <name>[alpha-D-GalNAc-(1-&gt;4)]2-[beta-D-Glc-(1-&gt;3)]-[alpha-D-GalNAc-(1-&gt;4)]2-alpha-D-GalNAc-(1-&gt;3)-alpha-D-diNAcBac-tri-trans,hepta-cis-undecaprenyl diphosphate</name>
        <dbReference type="ChEBI" id="CHEBI:68654"/>
    </ligand>
</feature>
<feature type="binding site" evidence="1">
    <location>
        <position position="316"/>
    </location>
    <ligand>
        <name>Mn(2+)</name>
        <dbReference type="ChEBI" id="CHEBI:29035"/>
    </ligand>
</feature>
<feature type="binding site" evidence="1">
    <location>
        <position position="372"/>
    </location>
    <ligand>
        <name>[alpha-D-GalNAc-(1-&gt;4)]2-[beta-D-Glc-(1-&gt;3)]-[alpha-D-GalNAc-(1-&gt;4)]2-alpha-D-GalNAc-(1-&gt;3)-alpha-D-diNAcBac-tri-trans,hepta-cis-undecaprenyl diphosphate</name>
        <dbReference type="ChEBI" id="CHEBI:68654"/>
    </ligand>
</feature>
<feature type="binding site" evidence="1">
    <location>
        <position position="462"/>
    </location>
    <ligand>
        <name>[alpha-D-GalNAc-(1-&gt;4)]2-[beta-D-Glc-(1-&gt;3)]-[alpha-D-GalNAc-(1-&gt;4)]2-alpha-D-GalNAc-(1-&gt;3)-alpha-D-diNAcBac-tri-trans,hepta-cis-undecaprenyl diphosphate</name>
        <dbReference type="ChEBI" id="CHEBI:68654"/>
    </ligand>
</feature>
<feature type="site" description="Interacts with target acceptor peptide in protein substrate" evidence="1">
    <location>
        <position position="54"/>
    </location>
</feature>
<feature type="site" description="Important for catalytic activity" evidence="1">
    <location>
        <position position="145"/>
    </location>
</feature>
<feature type="site" description="Interacts with target acceptor peptide in protein substrate" evidence="1">
    <location>
        <position position="316"/>
    </location>
</feature>
<feature type="site" description="Interacts with target acceptor peptide in protein substrate; important for extended sequon recognition" evidence="1">
    <location>
        <position position="328"/>
    </location>
</feature>
<feature type="site" description="Interacts with target acceptor peptide in protein substrate" evidence="1">
    <location>
        <position position="571"/>
    </location>
</feature>
<feature type="glycosylation site" description="N-linked (DATDGlc) asparagine" evidence="1">
    <location>
        <position position="534"/>
    </location>
</feature>
<evidence type="ECO:0000250" key="1">
    <source>
        <dbReference type="UniProtKB" id="B9KDD4"/>
    </source>
</evidence>
<evidence type="ECO:0000250" key="2">
    <source>
        <dbReference type="UniProtKB" id="O29867"/>
    </source>
</evidence>
<evidence type="ECO:0000250" key="3">
    <source>
        <dbReference type="UniProtKB" id="O29918"/>
    </source>
</evidence>
<evidence type="ECO:0000255" key="4"/>
<evidence type="ECO:0000269" key="5">
    <source>
    </source>
</evidence>
<evidence type="ECO:0000305" key="6"/>
<evidence type="ECO:0000305" key="7">
    <source>
    </source>
</evidence>